<gene>
    <name type="primary">GGPS1</name>
</gene>
<accession>P56966</accession>
<accession>Q0VC78</accession>
<protein>
    <recommendedName>
        <fullName>Geranylgeranyl pyrophosphate synthase</fullName>
        <shortName>GGPP synthase</shortName>
        <shortName>GGPPSase</shortName>
        <ecNumber>2.5.1.-</ecNumber>
    </recommendedName>
    <alternativeName>
        <fullName>(2E,6E)-farnesyl diphosphate synthase</fullName>
    </alternativeName>
    <alternativeName>
        <fullName>Dimethylallyltranstransferase</fullName>
        <ecNumber>2.5.1.1</ecNumber>
    </alternativeName>
    <alternativeName>
        <fullName>Farnesyl diphosphate synthase</fullName>
    </alternativeName>
    <alternativeName>
        <fullName>Farnesyltranstransferase</fullName>
        <ecNumber>2.5.1.29</ecNumber>
    </alternativeName>
    <alternativeName>
        <fullName>Geranylgeranyl diphosphate synthase</fullName>
    </alternativeName>
    <alternativeName>
        <fullName>Geranyltranstransferase</fullName>
        <ecNumber>2.5.1.10</ecNumber>
    </alternativeName>
</protein>
<reference key="1">
    <citation type="submission" date="2006-08" db="EMBL/GenBank/DDBJ databases">
        <authorList>
            <consortium name="NIH - Mammalian Gene Collection (MGC) project"/>
        </authorList>
    </citation>
    <scope>NUCLEOTIDE SEQUENCE [LARGE SCALE MRNA]</scope>
    <source>
        <strain>Hereford</strain>
        <tissue>Brain cortex</tissue>
    </source>
</reference>
<reference key="2">
    <citation type="journal article" date="1999" name="J. Biol. Chem.">
        <title>Human geranylgeranyl diphosphate synthase. cDNA cloning and expression.</title>
        <authorList>
            <person name="Kuzuguchi T."/>
            <person name="Morita Y."/>
            <person name="Sagami I."/>
            <person name="Sagami H."/>
            <person name="Ogura K."/>
        </authorList>
    </citation>
    <scope>NUCLEOTIDE SEQUENCE [MRNA] OF 3-296</scope>
    <scope>PROTEIN SEQUENCE OF 3-16 AND 289-296</scope>
</reference>
<dbReference type="EC" id="2.5.1.-"/>
<dbReference type="EC" id="2.5.1.1"/>
<dbReference type="EC" id="2.5.1.29"/>
<dbReference type="EC" id="2.5.1.10"/>
<dbReference type="EMBL" id="BC120313">
    <property type="protein sequence ID" value="AAI20314.1"/>
    <property type="molecule type" value="mRNA"/>
</dbReference>
<dbReference type="RefSeq" id="NP_001073269.1">
    <property type="nucleotide sequence ID" value="NM_001079801.1"/>
</dbReference>
<dbReference type="RefSeq" id="XP_010818738.1">
    <property type="nucleotide sequence ID" value="XM_010820436.1"/>
</dbReference>
<dbReference type="RefSeq" id="XP_024842554.1">
    <property type="nucleotide sequence ID" value="XM_024986786.2"/>
</dbReference>
<dbReference type="SMR" id="P56966"/>
<dbReference type="FunCoup" id="P56966">
    <property type="interactions" value="3708"/>
</dbReference>
<dbReference type="STRING" id="9913.ENSBTAP00000017376"/>
<dbReference type="PaxDb" id="9913-ENSBTAP00000017376"/>
<dbReference type="Ensembl" id="ENSBTAT00000017376.6">
    <property type="protein sequence ID" value="ENSBTAP00000017376.4"/>
    <property type="gene ID" value="ENSBTAG00000013068.6"/>
</dbReference>
<dbReference type="GeneID" id="780882"/>
<dbReference type="KEGG" id="bta:780882"/>
<dbReference type="CTD" id="9453"/>
<dbReference type="VEuPathDB" id="HostDB:ENSBTAG00000013068"/>
<dbReference type="VGNC" id="VGNC:29343">
    <property type="gene designation" value="GGPS1"/>
</dbReference>
<dbReference type="eggNOG" id="KOG0777">
    <property type="taxonomic scope" value="Eukaryota"/>
</dbReference>
<dbReference type="GeneTree" id="ENSGT00940000153498"/>
<dbReference type="HOGENOM" id="CLU_014015_6_0_1"/>
<dbReference type="InParanoid" id="P56966"/>
<dbReference type="OMA" id="FYSKAFF"/>
<dbReference type="OrthoDB" id="6921389at2759"/>
<dbReference type="TreeFam" id="TF300101"/>
<dbReference type="Reactome" id="R-BTA-191273">
    <property type="pathway name" value="Cholesterol biosynthesis"/>
</dbReference>
<dbReference type="UniPathway" id="UPA00259">
    <property type="reaction ID" value="UER00368"/>
</dbReference>
<dbReference type="UniPathway" id="UPA00260">
    <property type="reaction ID" value="UER00369"/>
</dbReference>
<dbReference type="UniPathway" id="UPA00389">
    <property type="reaction ID" value="UER00564"/>
</dbReference>
<dbReference type="Proteomes" id="UP000009136">
    <property type="component" value="Chromosome 28"/>
</dbReference>
<dbReference type="Bgee" id="ENSBTAG00000013068">
    <property type="expression patterns" value="Expressed in oocyte and 106 other cell types or tissues"/>
</dbReference>
<dbReference type="GO" id="GO:0005737">
    <property type="term" value="C:cytoplasm"/>
    <property type="evidence" value="ECO:0000250"/>
    <property type="project" value="UniProtKB"/>
</dbReference>
<dbReference type="GO" id="GO:0005829">
    <property type="term" value="C:cytosol"/>
    <property type="evidence" value="ECO:0007669"/>
    <property type="project" value="Ensembl"/>
</dbReference>
<dbReference type="GO" id="GO:0005654">
    <property type="term" value="C:nucleoplasm"/>
    <property type="evidence" value="ECO:0007669"/>
    <property type="project" value="Ensembl"/>
</dbReference>
<dbReference type="GO" id="GO:0048471">
    <property type="term" value="C:perinuclear region of cytoplasm"/>
    <property type="evidence" value="ECO:0000250"/>
    <property type="project" value="UniProtKB"/>
</dbReference>
<dbReference type="GO" id="GO:0030018">
    <property type="term" value="C:Z disc"/>
    <property type="evidence" value="ECO:0000250"/>
    <property type="project" value="UniProtKB"/>
</dbReference>
<dbReference type="GO" id="GO:0004337">
    <property type="term" value="F:(2E,6E)-farnesyl diphosphate synthase activity"/>
    <property type="evidence" value="ECO:0007669"/>
    <property type="project" value="UniProtKB-EC"/>
</dbReference>
<dbReference type="GO" id="GO:0004161">
    <property type="term" value="F:dimethylallyltranstransferase activity"/>
    <property type="evidence" value="ECO:0007669"/>
    <property type="project" value="UniProtKB-EC"/>
</dbReference>
<dbReference type="GO" id="GO:0004311">
    <property type="term" value="F:geranylgeranyl diphosphate synthase activity"/>
    <property type="evidence" value="ECO:0000314"/>
    <property type="project" value="UniProtKB"/>
</dbReference>
<dbReference type="GO" id="GO:0042802">
    <property type="term" value="F:identical protein binding"/>
    <property type="evidence" value="ECO:0007669"/>
    <property type="project" value="Ensembl"/>
</dbReference>
<dbReference type="GO" id="GO:0046872">
    <property type="term" value="F:metal ion binding"/>
    <property type="evidence" value="ECO:0007669"/>
    <property type="project" value="UniProtKB-KW"/>
</dbReference>
<dbReference type="GO" id="GO:0045337">
    <property type="term" value="P:farnesyl diphosphate biosynthetic process"/>
    <property type="evidence" value="ECO:0007669"/>
    <property type="project" value="UniProtKB-UniPathway"/>
</dbReference>
<dbReference type="GO" id="GO:0033384">
    <property type="term" value="P:geranyl diphosphate biosynthetic process"/>
    <property type="evidence" value="ECO:0007669"/>
    <property type="project" value="UniProtKB-UniPathway"/>
</dbReference>
<dbReference type="GO" id="GO:0033386">
    <property type="term" value="P:geranylgeranyl diphosphate biosynthetic process"/>
    <property type="evidence" value="ECO:0007669"/>
    <property type="project" value="UniProtKB-UniPathway"/>
</dbReference>
<dbReference type="GO" id="GO:0008299">
    <property type="term" value="P:isoprenoid biosynthetic process"/>
    <property type="evidence" value="ECO:0000318"/>
    <property type="project" value="GO_Central"/>
</dbReference>
<dbReference type="GO" id="GO:0006720">
    <property type="term" value="P:isoprenoid metabolic process"/>
    <property type="evidence" value="ECO:0000314"/>
    <property type="project" value="UniProtKB"/>
</dbReference>
<dbReference type="CDD" id="cd00685">
    <property type="entry name" value="Trans_IPPS_HT"/>
    <property type="match status" value="1"/>
</dbReference>
<dbReference type="FunFam" id="1.10.600.10:FF:000009">
    <property type="entry name" value="Geranylgeranyl pyrophosphate synthase"/>
    <property type="match status" value="1"/>
</dbReference>
<dbReference type="Gene3D" id="1.10.600.10">
    <property type="entry name" value="Farnesyl Diphosphate Synthase"/>
    <property type="match status" value="1"/>
</dbReference>
<dbReference type="InterPro" id="IPR008949">
    <property type="entry name" value="Isoprenoid_synthase_dom_sf"/>
</dbReference>
<dbReference type="InterPro" id="IPR000092">
    <property type="entry name" value="Polyprenyl_synt"/>
</dbReference>
<dbReference type="InterPro" id="IPR033749">
    <property type="entry name" value="Polyprenyl_synt_CS"/>
</dbReference>
<dbReference type="PANTHER" id="PTHR12001">
    <property type="entry name" value="GERANYLGERANYL PYROPHOSPHATE SYNTHASE"/>
    <property type="match status" value="1"/>
</dbReference>
<dbReference type="PANTHER" id="PTHR12001:SF44">
    <property type="entry name" value="GERANYLGERANYL PYROPHOSPHATE SYNTHASE"/>
    <property type="match status" value="1"/>
</dbReference>
<dbReference type="Pfam" id="PF00348">
    <property type="entry name" value="polyprenyl_synt"/>
    <property type="match status" value="1"/>
</dbReference>
<dbReference type="SFLD" id="SFLDS00005">
    <property type="entry name" value="Isoprenoid_Synthase_Type_I"/>
    <property type="match status" value="1"/>
</dbReference>
<dbReference type="SFLD" id="SFLDG01017">
    <property type="entry name" value="Polyprenyl_Transferase_Like"/>
    <property type="match status" value="1"/>
</dbReference>
<dbReference type="SUPFAM" id="SSF48576">
    <property type="entry name" value="Terpenoid synthases"/>
    <property type="match status" value="1"/>
</dbReference>
<dbReference type="PROSITE" id="PS00723">
    <property type="entry name" value="POLYPRENYL_SYNTHASE_1"/>
    <property type="match status" value="1"/>
</dbReference>
<dbReference type="PROSITE" id="PS00444">
    <property type="entry name" value="POLYPRENYL_SYNTHASE_2"/>
    <property type="match status" value="1"/>
</dbReference>
<organism>
    <name type="scientific">Bos taurus</name>
    <name type="common">Bovine</name>
    <dbReference type="NCBI Taxonomy" id="9913"/>
    <lineage>
        <taxon>Eukaryota</taxon>
        <taxon>Metazoa</taxon>
        <taxon>Chordata</taxon>
        <taxon>Craniata</taxon>
        <taxon>Vertebrata</taxon>
        <taxon>Euteleostomi</taxon>
        <taxon>Mammalia</taxon>
        <taxon>Eutheria</taxon>
        <taxon>Laurasiatheria</taxon>
        <taxon>Artiodactyla</taxon>
        <taxon>Ruminantia</taxon>
        <taxon>Pecora</taxon>
        <taxon>Bovidae</taxon>
        <taxon>Bovinae</taxon>
        <taxon>Bos</taxon>
    </lineage>
</organism>
<evidence type="ECO:0000250" key="1"/>
<evidence type="ECO:0000250" key="2">
    <source>
        <dbReference type="UniProtKB" id="O95749"/>
    </source>
</evidence>
<evidence type="ECO:0000250" key="3">
    <source>
        <dbReference type="UniProtKB" id="P14324"/>
    </source>
</evidence>
<evidence type="ECO:0000250" key="4">
    <source>
        <dbReference type="UniProtKB" id="Q12051"/>
    </source>
</evidence>
<evidence type="ECO:0000305" key="5"/>
<sequence length="300" mass="34900">MEKTQETVQRILLEPYKYLLQLPGKQVRTKLSQAFNHWLKVPEDKLQIIIEVTEMLHNASLLIDDIEDNSKLRRGFPVAHSIYGIPSVINSANYVYFLGLEKVLTLNHPDAVKLFTRQLLELHQGQGLDIYWRDNYTCPTEEEYKAMVLQKTGGLFGLAVGLMQLFSDYKEDLKPLLDTLGLFFQIRDDYANLHSKEYSENKSFCEDLTEGKFSFPTIHAIWSRPESTQVQNILRQRTENIDIKKYCVHYLENVGSFEYTRNTLKELESKAYKQIDARGGNPELVALIKHLSKMFKEENE</sequence>
<keyword id="KW-0007">Acetylation</keyword>
<keyword id="KW-0963">Cytoplasm</keyword>
<keyword id="KW-0903">Direct protein sequencing</keyword>
<keyword id="KW-0414">Isoprene biosynthesis</keyword>
<keyword id="KW-0443">Lipid metabolism</keyword>
<keyword id="KW-0460">Magnesium</keyword>
<keyword id="KW-0479">Metal-binding</keyword>
<keyword id="KW-1185">Reference proteome</keyword>
<keyword id="KW-0808">Transferase</keyword>
<proteinExistence type="evidence at protein level"/>
<feature type="chain" id="PRO_0000123961" description="Geranylgeranyl pyrophosphate synthase">
    <location>
        <begin position="1"/>
        <end position="300"/>
    </location>
</feature>
<feature type="binding site" evidence="3">
    <location>
        <position position="25"/>
    </location>
    <ligand>
        <name>isopentenyl diphosphate</name>
        <dbReference type="ChEBI" id="CHEBI:128769"/>
    </ligand>
</feature>
<feature type="binding site" evidence="3">
    <location>
        <position position="28"/>
    </location>
    <ligand>
        <name>isopentenyl diphosphate</name>
        <dbReference type="ChEBI" id="CHEBI:128769"/>
    </ligand>
</feature>
<feature type="binding site" evidence="4">
    <location>
        <position position="57"/>
    </location>
    <ligand>
        <name>isopentenyl diphosphate</name>
        <dbReference type="ChEBI" id="CHEBI:128769"/>
    </ligand>
</feature>
<feature type="binding site" evidence="3">
    <location>
        <position position="64"/>
    </location>
    <ligand>
        <name>Mg(2+)</name>
        <dbReference type="ChEBI" id="CHEBI:18420"/>
        <label>1</label>
    </ligand>
</feature>
<feature type="binding site" evidence="3">
    <location>
        <position position="64"/>
    </location>
    <ligand>
        <name>Mg(2+)</name>
        <dbReference type="ChEBI" id="CHEBI:18420"/>
        <label>2</label>
    </ligand>
</feature>
<feature type="binding site" evidence="3">
    <location>
        <position position="68"/>
    </location>
    <ligand>
        <name>Mg(2+)</name>
        <dbReference type="ChEBI" id="CHEBI:18420"/>
        <label>1</label>
    </ligand>
</feature>
<feature type="binding site" evidence="3">
    <location>
        <position position="68"/>
    </location>
    <ligand>
        <name>Mg(2+)</name>
        <dbReference type="ChEBI" id="CHEBI:18420"/>
        <label>2</label>
    </ligand>
</feature>
<feature type="binding site" evidence="1">
    <location>
        <position position="73"/>
    </location>
    <ligand>
        <name>dimethylallyl diphosphate</name>
        <dbReference type="ChEBI" id="CHEBI:57623"/>
    </ligand>
</feature>
<feature type="binding site" evidence="3">
    <location>
        <position position="74"/>
    </location>
    <ligand>
        <name>isopentenyl diphosphate</name>
        <dbReference type="ChEBI" id="CHEBI:128769"/>
    </ligand>
</feature>
<feature type="binding site" evidence="1">
    <location>
        <position position="151"/>
    </location>
    <ligand>
        <name>dimethylallyl diphosphate</name>
        <dbReference type="ChEBI" id="CHEBI:57623"/>
    </ligand>
</feature>
<feature type="binding site" evidence="1">
    <location>
        <position position="152"/>
    </location>
    <ligand>
        <name>dimethylallyl diphosphate</name>
        <dbReference type="ChEBI" id="CHEBI:57623"/>
    </ligand>
</feature>
<feature type="binding site" evidence="1">
    <location>
        <position position="185"/>
    </location>
    <ligand>
        <name>dimethylallyl diphosphate</name>
        <dbReference type="ChEBI" id="CHEBI:57623"/>
    </ligand>
</feature>
<feature type="binding site" evidence="1">
    <location>
        <position position="202"/>
    </location>
    <ligand>
        <name>dimethylallyl diphosphate</name>
        <dbReference type="ChEBI" id="CHEBI:57623"/>
    </ligand>
</feature>
<feature type="binding site" evidence="1">
    <location>
        <position position="212"/>
    </location>
    <ligand>
        <name>dimethylallyl diphosphate</name>
        <dbReference type="ChEBI" id="CHEBI:57623"/>
    </ligand>
</feature>
<feature type="modified residue" description="N-acetylmethionine" evidence="2">
    <location>
        <position position="1"/>
    </location>
</feature>
<comment type="function">
    <text evidence="2">Catalyzes the trans-addition of the three molecules of IPP onto DMAPP to form geranylgeranyl pyrophosphate, an important precursor of carotenoids and geranylated proteins.</text>
</comment>
<comment type="catalytic activity">
    <reaction>
        <text>isopentenyl diphosphate + dimethylallyl diphosphate = (2E)-geranyl diphosphate + diphosphate</text>
        <dbReference type="Rhea" id="RHEA:22408"/>
        <dbReference type="ChEBI" id="CHEBI:33019"/>
        <dbReference type="ChEBI" id="CHEBI:57623"/>
        <dbReference type="ChEBI" id="CHEBI:58057"/>
        <dbReference type="ChEBI" id="CHEBI:128769"/>
        <dbReference type="EC" id="2.5.1.1"/>
    </reaction>
</comment>
<comment type="catalytic activity">
    <reaction>
        <text>isopentenyl diphosphate + (2E)-geranyl diphosphate = (2E,6E)-farnesyl diphosphate + diphosphate</text>
        <dbReference type="Rhea" id="RHEA:19361"/>
        <dbReference type="ChEBI" id="CHEBI:33019"/>
        <dbReference type="ChEBI" id="CHEBI:58057"/>
        <dbReference type="ChEBI" id="CHEBI:128769"/>
        <dbReference type="ChEBI" id="CHEBI:175763"/>
        <dbReference type="EC" id="2.5.1.10"/>
    </reaction>
</comment>
<comment type="catalytic activity">
    <reaction>
        <text>isopentenyl diphosphate + (2E,6E)-farnesyl diphosphate = (2E,6E,10E)-geranylgeranyl diphosphate + diphosphate</text>
        <dbReference type="Rhea" id="RHEA:17653"/>
        <dbReference type="ChEBI" id="CHEBI:33019"/>
        <dbReference type="ChEBI" id="CHEBI:58756"/>
        <dbReference type="ChEBI" id="CHEBI:128769"/>
        <dbReference type="ChEBI" id="CHEBI:175763"/>
        <dbReference type="EC" id="2.5.1.29"/>
    </reaction>
</comment>
<comment type="cofactor">
    <cofactor evidence="1">
        <name>Mg(2+)</name>
        <dbReference type="ChEBI" id="CHEBI:18420"/>
    </cofactor>
    <text evidence="1">Binds 2 Mg(2+) ions per subunit.</text>
</comment>
<comment type="pathway">
    <text>Isoprenoid biosynthesis; farnesyl diphosphate biosynthesis; farnesyl diphosphate from geranyl diphosphate and isopentenyl diphosphate: step 1/1.</text>
</comment>
<comment type="pathway">
    <text>Isoprenoid biosynthesis; geranyl diphosphate biosynthesis; geranyl diphosphate from dimethylallyl diphosphate and isopentenyl diphosphate: step 1/1.</text>
</comment>
<comment type="pathway">
    <text>Isoprenoid biosynthesis; geranylgeranyl diphosphate biosynthesis; geranylgeranyl diphosphate from farnesyl diphosphate and isopentenyl diphosphate: step 1/1.</text>
</comment>
<comment type="subunit">
    <text evidence="1">Homohexamer; trimer of homodimers.</text>
</comment>
<comment type="subcellular location">
    <subcellularLocation>
        <location evidence="5">Cytoplasm</location>
    </subcellularLocation>
    <subcellularLocation>
        <location evidence="2">Cytoplasm</location>
        <location evidence="2">Perinuclear region</location>
    </subcellularLocation>
    <subcellularLocation>
        <location evidence="2">Cytoplasm</location>
        <location evidence="2">Myofibril</location>
        <location evidence="2">Sarcomere</location>
        <location evidence="2">Z line</location>
    </subcellularLocation>
</comment>
<comment type="similarity">
    <text evidence="5">Belongs to the FPP/GGPP synthase family.</text>
</comment>
<name>GGPPS_BOVIN</name>